<accession>Q2YSC2</accession>
<feature type="chain" id="PRO_0000234890" description="Large ribosomal subunit protein uL10">
    <location>
        <begin position="1"/>
        <end position="166"/>
    </location>
</feature>
<comment type="function">
    <text evidence="1">Forms part of the ribosomal stalk, playing a central role in the interaction of the ribosome with GTP-bound translation factors.</text>
</comment>
<comment type="subunit">
    <text evidence="1">Part of the ribosomal stalk of the 50S ribosomal subunit. The N-terminus interacts with L11 and the large rRNA to form the base of the stalk. The C-terminus forms an elongated spine to which L12 dimers bind in a sequential fashion forming a multimeric L10(L12)X complex.</text>
</comment>
<comment type="similarity">
    <text evidence="1">Belongs to the universal ribosomal protein uL10 family.</text>
</comment>
<keyword id="KW-0687">Ribonucleoprotein</keyword>
<keyword id="KW-0689">Ribosomal protein</keyword>
<keyword id="KW-0694">RNA-binding</keyword>
<keyword id="KW-0699">rRNA-binding</keyword>
<protein>
    <recommendedName>
        <fullName evidence="1">Large ribosomal subunit protein uL10</fullName>
    </recommendedName>
    <alternativeName>
        <fullName evidence="2">50S ribosomal protein L10</fullName>
    </alternativeName>
</protein>
<name>RL10_STAAB</name>
<proteinExistence type="inferred from homology"/>
<dbReference type="EMBL" id="AJ938182">
    <property type="protein sequence ID" value="CAI80178.1"/>
    <property type="molecule type" value="Genomic_DNA"/>
</dbReference>
<dbReference type="RefSeq" id="WP_001273085.1">
    <property type="nucleotide sequence ID" value="NC_007622.1"/>
</dbReference>
<dbReference type="SMR" id="Q2YSC2"/>
<dbReference type="KEGG" id="sab:SAB0490"/>
<dbReference type="HOGENOM" id="CLU_092227_2_0_9"/>
<dbReference type="GO" id="GO:0015934">
    <property type="term" value="C:large ribosomal subunit"/>
    <property type="evidence" value="ECO:0007669"/>
    <property type="project" value="InterPro"/>
</dbReference>
<dbReference type="GO" id="GO:0070180">
    <property type="term" value="F:large ribosomal subunit rRNA binding"/>
    <property type="evidence" value="ECO:0007669"/>
    <property type="project" value="UniProtKB-UniRule"/>
</dbReference>
<dbReference type="GO" id="GO:0003735">
    <property type="term" value="F:structural constituent of ribosome"/>
    <property type="evidence" value="ECO:0007669"/>
    <property type="project" value="InterPro"/>
</dbReference>
<dbReference type="GO" id="GO:0006412">
    <property type="term" value="P:translation"/>
    <property type="evidence" value="ECO:0007669"/>
    <property type="project" value="UniProtKB-UniRule"/>
</dbReference>
<dbReference type="CDD" id="cd05797">
    <property type="entry name" value="Ribosomal_L10"/>
    <property type="match status" value="1"/>
</dbReference>
<dbReference type="FunFam" id="3.30.70.1730:FF:000001">
    <property type="entry name" value="50S ribosomal protein L10"/>
    <property type="match status" value="1"/>
</dbReference>
<dbReference type="Gene3D" id="3.30.70.1730">
    <property type="match status" value="1"/>
</dbReference>
<dbReference type="Gene3D" id="6.10.250.290">
    <property type="match status" value="1"/>
</dbReference>
<dbReference type="HAMAP" id="MF_00362">
    <property type="entry name" value="Ribosomal_uL10"/>
    <property type="match status" value="1"/>
</dbReference>
<dbReference type="InterPro" id="IPR001790">
    <property type="entry name" value="Ribosomal_uL10"/>
</dbReference>
<dbReference type="InterPro" id="IPR043141">
    <property type="entry name" value="Ribosomal_uL10-like_sf"/>
</dbReference>
<dbReference type="InterPro" id="IPR022973">
    <property type="entry name" value="Ribosomal_uL10_bac"/>
</dbReference>
<dbReference type="InterPro" id="IPR047865">
    <property type="entry name" value="Ribosomal_uL10_bac_type"/>
</dbReference>
<dbReference type="InterPro" id="IPR002363">
    <property type="entry name" value="Ribosomal_uL10_CS_bac"/>
</dbReference>
<dbReference type="NCBIfam" id="NF000955">
    <property type="entry name" value="PRK00099.1-1"/>
    <property type="match status" value="1"/>
</dbReference>
<dbReference type="PANTHER" id="PTHR11560">
    <property type="entry name" value="39S RIBOSOMAL PROTEIN L10, MITOCHONDRIAL"/>
    <property type="match status" value="1"/>
</dbReference>
<dbReference type="Pfam" id="PF00466">
    <property type="entry name" value="Ribosomal_L10"/>
    <property type="match status" value="1"/>
</dbReference>
<dbReference type="SUPFAM" id="SSF160369">
    <property type="entry name" value="Ribosomal protein L10-like"/>
    <property type="match status" value="1"/>
</dbReference>
<dbReference type="PROSITE" id="PS01109">
    <property type="entry name" value="RIBOSOMAL_L10"/>
    <property type="match status" value="1"/>
</dbReference>
<gene>
    <name evidence="1" type="primary">rplJ</name>
    <name type="ordered locus">SAB0490</name>
</gene>
<organism>
    <name type="scientific">Staphylococcus aureus (strain bovine RF122 / ET3-1)</name>
    <dbReference type="NCBI Taxonomy" id="273036"/>
    <lineage>
        <taxon>Bacteria</taxon>
        <taxon>Bacillati</taxon>
        <taxon>Bacillota</taxon>
        <taxon>Bacilli</taxon>
        <taxon>Bacillales</taxon>
        <taxon>Staphylococcaceae</taxon>
        <taxon>Staphylococcus</taxon>
    </lineage>
</organism>
<evidence type="ECO:0000255" key="1">
    <source>
        <dbReference type="HAMAP-Rule" id="MF_00362"/>
    </source>
</evidence>
<evidence type="ECO:0000305" key="2"/>
<reference key="1">
    <citation type="journal article" date="2007" name="PLoS ONE">
        <title>Molecular correlates of host specialization in Staphylococcus aureus.</title>
        <authorList>
            <person name="Herron-Olson L."/>
            <person name="Fitzgerald J.R."/>
            <person name="Musser J.M."/>
            <person name="Kapur V."/>
        </authorList>
    </citation>
    <scope>NUCLEOTIDE SEQUENCE [LARGE SCALE GENOMIC DNA]</scope>
    <source>
        <strain>bovine RF122 / ET3-1</strain>
    </source>
</reference>
<sequence length="166" mass="17710">MSAIIEAKKQLVDEIAEVLSNSVSTVIVDYRGLTVAEVTDLRSQLREAGVEYKVYKNTMVRRAAEKAGIEGLDEFLTGPTAIATSSEDAVAAAKVISGFAKDHEALEIKSGVMEGNVITAEEVKTVGSLPSHDGLVSMLLSVLQAPVRNFAYAVKAIGEQKEENAE</sequence>